<dbReference type="EMBL" id="AF503583">
    <property type="protein sequence ID" value="AAM46894.1"/>
    <property type="molecule type" value="mRNA"/>
</dbReference>
<dbReference type="EMBL" id="CM000130">
    <property type="protein sequence ID" value="EAY96485.1"/>
    <property type="status" value="ALT_SEQ"/>
    <property type="molecule type" value="Genomic_DNA"/>
</dbReference>
<dbReference type="HOGENOM" id="CLU_2416946_0_0_1"/>
<dbReference type="Proteomes" id="UP000007015">
    <property type="component" value="Chromosome 5"/>
</dbReference>
<dbReference type="GO" id="GO:0016020">
    <property type="term" value="C:membrane"/>
    <property type="evidence" value="ECO:0007669"/>
    <property type="project" value="UniProtKB-SubCell"/>
</dbReference>
<dbReference type="InterPro" id="IPR000612">
    <property type="entry name" value="PMP3"/>
</dbReference>
<dbReference type="PANTHER" id="PTHR21659:SF120">
    <property type="entry name" value="HYDROPHOBIC PROTEIN LTI6B"/>
    <property type="match status" value="1"/>
</dbReference>
<dbReference type="PANTHER" id="PTHR21659">
    <property type="entry name" value="HYDROPHOBIC PROTEIN RCI2 LOW TEMPERATURE AND SALT RESPONSIVE PROTEIN LTI6 -RELATED"/>
    <property type="match status" value="1"/>
</dbReference>
<dbReference type="Pfam" id="PF01679">
    <property type="entry name" value="Pmp3"/>
    <property type="match status" value="1"/>
</dbReference>
<dbReference type="PROSITE" id="PS01309">
    <property type="entry name" value="UPF0057"/>
    <property type="match status" value="1"/>
</dbReference>
<reference key="1">
    <citation type="submission" date="2003-11" db="EMBL/GenBank/DDBJ databases">
        <title>Identification of early drought-induced cDNAs in rice.</title>
        <authorList>
            <person name="Klueva N."/>
            <person name="Tyagi A."/>
            <person name="Zhang J."/>
            <person name="Zheng H."/>
            <person name="Nguyen H."/>
        </authorList>
    </citation>
    <scope>NUCLEOTIDE SEQUENCE [MRNA]</scope>
    <source>
        <strain>cv. IR62266-42-6-2</strain>
    </source>
</reference>
<reference key="2">
    <citation type="journal article" date="2005" name="PLoS Biol.">
        <title>The genomes of Oryza sativa: a history of duplications.</title>
        <authorList>
            <person name="Yu J."/>
            <person name="Wang J."/>
            <person name="Lin W."/>
            <person name="Li S."/>
            <person name="Li H."/>
            <person name="Zhou J."/>
            <person name="Ni P."/>
            <person name="Dong W."/>
            <person name="Hu S."/>
            <person name="Zeng C."/>
            <person name="Zhang J."/>
            <person name="Zhang Y."/>
            <person name="Li R."/>
            <person name="Xu Z."/>
            <person name="Li S."/>
            <person name="Li X."/>
            <person name="Zheng H."/>
            <person name="Cong L."/>
            <person name="Lin L."/>
            <person name="Yin J."/>
            <person name="Geng J."/>
            <person name="Li G."/>
            <person name="Shi J."/>
            <person name="Liu J."/>
            <person name="Lv H."/>
            <person name="Li J."/>
            <person name="Wang J."/>
            <person name="Deng Y."/>
            <person name="Ran L."/>
            <person name="Shi X."/>
            <person name="Wang X."/>
            <person name="Wu Q."/>
            <person name="Li C."/>
            <person name="Ren X."/>
            <person name="Wang J."/>
            <person name="Wang X."/>
            <person name="Li D."/>
            <person name="Liu D."/>
            <person name="Zhang X."/>
            <person name="Ji Z."/>
            <person name="Zhao W."/>
            <person name="Sun Y."/>
            <person name="Zhang Z."/>
            <person name="Bao J."/>
            <person name="Han Y."/>
            <person name="Dong L."/>
            <person name="Ji J."/>
            <person name="Chen P."/>
            <person name="Wu S."/>
            <person name="Liu J."/>
            <person name="Xiao Y."/>
            <person name="Bu D."/>
            <person name="Tan J."/>
            <person name="Yang L."/>
            <person name="Ye C."/>
            <person name="Zhang J."/>
            <person name="Xu J."/>
            <person name="Zhou Y."/>
            <person name="Yu Y."/>
            <person name="Zhang B."/>
            <person name="Zhuang S."/>
            <person name="Wei H."/>
            <person name="Liu B."/>
            <person name="Lei M."/>
            <person name="Yu H."/>
            <person name="Li Y."/>
            <person name="Xu H."/>
            <person name="Wei S."/>
            <person name="He X."/>
            <person name="Fang L."/>
            <person name="Zhang Z."/>
            <person name="Zhang Y."/>
            <person name="Huang X."/>
            <person name="Su Z."/>
            <person name="Tong W."/>
            <person name="Li J."/>
            <person name="Tong Z."/>
            <person name="Li S."/>
            <person name="Ye J."/>
            <person name="Wang L."/>
            <person name="Fang L."/>
            <person name="Lei T."/>
            <person name="Chen C.-S."/>
            <person name="Chen H.-C."/>
            <person name="Xu Z."/>
            <person name="Li H."/>
            <person name="Huang H."/>
            <person name="Zhang F."/>
            <person name="Xu H."/>
            <person name="Li N."/>
            <person name="Zhao C."/>
            <person name="Li S."/>
            <person name="Dong L."/>
            <person name="Huang Y."/>
            <person name="Li L."/>
            <person name="Xi Y."/>
            <person name="Qi Q."/>
            <person name="Li W."/>
            <person name="Zhang B."/>
            <person name="Hu W."/>
            <person name="Zhang Y."/>
            <person name="Tian X."/>
            <person name="Jiao Y."/>
            <person name="Liang X."/>
            <person name="Jin J."/>
            <person name="Gao L."/>
            <person name="Zheng W."/>
            <person name="Hao B."/>
            <person name="Liu S.-M."/>
            <person name="Wang W."/>
            <person name="Yuan L."/>
            <person name="Cao M."/>
            <person name="McDermott J."/>
            <person name="Samudrala R."/>
            <person name="Wang J."/>
            <person name="Wong G.K.-S."/>
            <person name="Yang H."/>
        </authorList>
    </citation>
    <scope>NUCLEOTIDE SEQUENCE [LARGE SCALE GENOMIC DNA]</scope>
    <source>
        <strain>cv. 93-11</strain>
    </source>
</reference>
<proteinExistence type="inferred from homology"/>
<gene>
    <name type="primary">LTI6B</name>
    <name type="synonym">DRR2</name>
    <name type="synonym">R1G1B</name>
    <name type="ORF">OsI_017718</name>
</gene>
<feature type="chain" id="PRO_0000303672" description="Hydrophobic protein LTI6B">
    <location>
        <begin position="1"/>
        <end position="55"/>
    </location>
</feature>
<feature type="transmembrane region" description="Helical" evidence="2">
    <location>
        <begin position="8"/>
        <end position="28"/>
    </location>
</feature>
<feature type="transmembrane region" description="Helical" evidence="2">
    <location>
        <begin position="31"/>
        <end position="51"/>
    </location>
</feature>
<keyword id="KW-0472">Membrane</keyword>
<keyword id="KW-1185">Reference proteome</keyword>
<keyword id="KW-0812">Transmembrane</keyword>
<keyword id="KW-1133">Transmembrane helix</keyword>
<name>LTI6B_ORYSI</name>
<comment type="function">
    <text evidence="1">Plays a role in the regulation of membrane potential. Could mediate a proton leak (By similarity).</text>
</comment>
<comment type="subcellular location">
    <subcellularLocation>
        <location evidence="3">Membrane</location>
        <topology evidence="3">Multi-pass membrane protein</topology>
    </subcellularLocation>
</comment>
<comment type="similarity">
    <text evidence="3">Belongs to the UPF0057 (PMP3) family.</text>
</comment>
<comment type="sequence caution" evidence="3">
    <conflict type="erroneous gene model prediction">
        <sequence resource="EMBL-CDS" id="EAY96485"/>
    </conflict>
</comment>
<accession>A2Y075</accession>
<accession>Q6AT93</accession>
<accession>Q6Q7C9</accession>
<accession>Q8LKS9</accession>
<sequence length="55" mass="6016">MAGTANCIDILIAIILPPLGVFLKFGCGHEFWICLLLTFLGYIPGIIYAIYAITK</sequence>
<evidence type="ECO:0000250" key="1"/>
<evidence type="ECO:0000255" key="2"/>
<evidence type="ECO:0000305" key="3"/>
<organism>
    <name type="scientific">Oryza sativa subsp. indica</name>
    <name type="common">Rice</name>
    <dbReference type="NCBI Taxonomy" id="39946"/>
    <lineage>
        <taxon>Eukaryota</taxon>
        <taxon>Viridiplantae</taxon>
        <taxon>Streptophyta</taxon>
        <taxon>Embryophyta</taxon>
        <taxon>Tracheophyta</taxon>
        <taxon>Spermatophyta</taxon>
        <taxon>Magnoliopsida</taxon>
        <taxon>Liliopsida</taxon>
        <taxon>Poales</taxon>
        <taxon>Poaceae</taxon>
        <taxon>BOP clade</taxon>
        <taxon>Oryzoideae</taxon>
        <taxon>Oryzeae</taxon>
        <taxon>Oryzinae</taxon>
        <taxon>Oryza</taxon>
        <taxon>Oryza sativa</taxon>
    </lineage>
</organism>
<protein>
    <recommendedName>
        <fullName>Hydrophobic protein LTI6B</fullName>
    </recommendedName>
    <alternativeName>
        <fullName>Low temperature-induced protein 6B</fullName>
    </alternativeName>
</protein>